<comment type="function">
    <text evidence="3">As part of the MCIA complex, primarily participates in the assembly of the mitochondrial complex I and therefore plays a role in oxidative phosphorylation. This moonlighting protein also has a dehydrogenase activity toward a broad range of substrates with greater specificity for long-chain unsaturated acyl-CoAs. However, in vivo, it does not seem to play a primary role in fatty acid oxidation. In addition, the function in complex I assembly is independent of the dehydrogenase activity of the protein.</text>
</comment>
<comment type="catalytic activity">
    <reaction evidence="3">
        <text>eicosanoyl-CoA + oxidized [electron-transfer flavoprotein] + H(+) = (2E)-eicosenoyl-CoA + reduced [electron-transfer flavoprotein]</text>
        <dbReference type="Rhea" id="RHEA:47236"/>
        <dbReference type="Rhea" id="RHEA-COMP:10685"/>
        <dbReference type="Rhea" id="RHEA-COMP:10686"/>
        <dbReference type="ChEBI" id="CHEBI:15378"/>
        <dbReference type="ChEBI" id="CHEBI:57380"/>
        <dbReference type="ChEBI" id="CHEBI:57692"/>
        <dbReference type="ChEBI" id="CHEBI:58307"/>
        <dbReference type="ChEBI" id="CHEBI:74691"/>
    </reaction>
    <physiologicalReaction direction="left-to-right" evidence="3">
        <dbReference type="Rhea" id="RHEA:47237"/>
    </physiologicalReaction>
</comment>
<comment type="catalytic activity">
    <reaction evidence="3">
        <text>octadecanoyl-CoA + oxidized [electron-transfer flavoprotein] + H(+) = (2E)-octadecenoyl-CoA + reduced [electron-transfer flavoprotein]</text>
        <dbReference type="Rhea" id="RHEA:47240"/>
        <dbReference type="Rhea" id="RHEA-COMP:10685"/>
        <dbReference type="Rhea" id="RHEA-COMP:10686"/>
        <dbReference type="ChEBI" id="CHEBI:15378"/>
        <dbReference type="ChEBI" id="CHEBI:57394"/>
        <dbReference type="ChEBI" id="CHEBI:57692"/>
        <dbReference type="ChEBI" id="CHEBI:58307"/>
        <dbReference type="ChEBI" id="CHEBI:71412"/>
    </reaction>
    <physiologicalReaction direction="left-to-right" evidence="3">
        <dbReference type="Rhea" id="RHEA:47241"/>
    </physiologicalReaction>
</comment>
<comment type="catalytic activity">
    <reaction evidence="3">
        <text>oxidized [electron-transfer flavoprotein] + hexadecanoyl-CoA + H(+) = (2E)-hexadecenoyl-CoA + reduced [electron-transfer flavoprotein]</text>
        <dbReference type="Rhea" id="RHEA:43448"/>
        <dbReference type="Rhea" id="RHEA-COMP:10685"/>
        <dbReference type="Rhea" id="RHEA-COMP:10686"/>
        <dbReference type="ChEBI" id="CHEBI:15378"/>
        <dbReference type="ChEBI" id="CHEBI:57379"/>
        <dbReference type="ChEBI" id="CHEBI:57692"/>
        <dbReference type="ChEBI" id="CHEBI:58307"/>
        <dbReference type="ChEBI" id="CHEBI:61526"/>
    </reaction>
    <physiologicalReaction direction="left-to-right" evidence="3">
        <dbReference type="Rhea" id="RHEA:43449"/>
    </physiologicalReaction>
</comment>
<comment type="catalytic activity">
    <reaction evidence="3">
        <text>decanoyl-CoA + oxidized [electron-transfer flavoprotein] + H(+) = (2E)-decenoyl-CoA + reduced [electron-transfer flavoprotein]</text>
        <dbReference type="Rhea" id="RHEA:48176"/>
        <dbReference type="Rhea" id="RHEA-COMP:10685"/>
        <dbReference type="Rhea" id="RHEA-COMP:10686"/>
        <dbReference type="ChEBI" id="CHEBI:15378"/>
        <dbReference type="ChEBI" id="CHEBI:57692"/>
        <dbReference type="ChEBI" id="CHEBI:58307"/>
        <dbReference type="ChEBI" id="CHEBI:61406"/>
        <dbReference type="ChEBI" id="CHEBI:61430"/>
    </reaction>
    <physiologicalReaction direction="left-to-right" evidence="3">
        <dbReference type="Rhea" id="RHEA:48177"/>
    </physiologicalReaction>
</comment>
<comment type="catalytic activity">
    <reaction evidence="3">
        <text>nonanoyl-CoA + oxidized [electron-transfer flavoprotein] + H(+) = (2E)-nonenoyl-CoA + reduced [electron-transfer flavoprotein]</text>
        <dbReference type="Rhea" id="RHEA:48208"/>
        <dbReference type="Rhea" id="RHEA-COMP:10685"/>
        <dbReference type="Rhea" id="RHEA-COMP:10686"/>
        <dbReference type="ChEBI" id="CHEBI:15378"/>
        <dbReference type="ChEBI" id="CHEBI:57692"/>
        <dbReference type="ChEBI" id="CHEBI:58307"/>
        <dbReference type="ChEBI" id="CHEBI:76291"/>
        <dbReference type="ChEBI" id="CHEBI:76292"/>
    </reaction>
    <physiologicalReaction direction="left-to-right" evidence="3">
        <dbReference type="Rhea" id="RHEA:48209"/>
    </physiologicalReaction>
</comment>
<comment type="catalytic activity">
    <reaction evidence="3">
        <text>pentadecanoyl-CoA + oxidized [electron-transfer flavoprotein] + H(+) = (2E)-pentadecenoyl-CoA + reduced [electron-transfer flavoprotein]</text>
        <dbReference type="Rhea" id="RHEA:48204"/>
        <dbReference type="Rhea" id="RHEA-COMP:10685"/>
        <dbReference type="Rhea" id="RHEA-COMP:10686"/>
        <dbReference type="ChEBI" id="CHEBI:15378"/>
        <dbReference type="ChEBI" id="CHEBI:57692"/>
        <dbReference type="ChEBI" id="CHEBI:58307"/>
        <dbReference type="ChEBI" id="CHEBI:74309"/>
        <dbReference type="ChEBI" id="CHEBI:77545"/>
    </reaction>
    <physiologicalReaction direction="left-to-right" evidence="3">
        <dbReference type="Rhea" id="RHEA:48205"/>
    </physiologicalReaction>
</comment>
<comment type="catalytic activity">
    <reaction evidence="3">
        <text>undecanoyl-CoA + oxidized [electron-transfer flavoprotein] + H(+) = trans-2-undecenoyl-CoA + reduced [electron-transfer flavoprotein]</text>
        <dbReference type="Rhea" id="RHEA:48200"/>
        <dbReference type="Rhea" id="RHEA-COMP:10685"/>
        <dbReference type="Rhea" id="RHEA-COMP:10686"/>
        <dbReference type="ChEBI" id="CHEBI:15378"/>
        <dbReference type="ChEBI" id="CHEBI:57692"/>
        <dbReference type="ChEBI" id="CHEBI:58307"/>
        <dbReference type="ChEBI" id="CHEBI:77547"/>
        <dbReference type="ChEBI" id="CHEBI:77548"/>
    </reaction>
    <physiologicalReaction direction="left-to-right" evidence="3">
        <dbReference type="Rhea" id="RHEA:48201"/>
    </physiologicalReaction>
</comment>
<comment type="catalytic activity">
    <reaction evidence="3">
        <text>(9Z)-hexadecenoyl-CoA + oxidized [electron-transfer flavoprotein] + H(+) = (2E,9Z)-hexadecadienoyl-CoA + reduced [electron-transfer flavoprotein]</text>
        <dbReference type="Rhea" id="RHEA:47304"/>
        <dbReference type="Rhea" id="RHEA-COMP:10685"/>
        <dbReference type="Rhea" id="RHEA-COMP:10686"/>
        <dbReference type="ChEBI" id="CHEBI:15378"/>
        <dbReference type="ChEBI" id="CHEBI:57692"/>
        <dbReference type="ChEBI" id="CHEBI:58307"/>
        <dbReference type="ChEBI" id="CHEBI:61540"/>
        <dbReference type="ChEBI" id="CHEBI:77549"/>
    </reaction>
    <physiologicalReaction direction="left-to-right" evidence="3">
        <dbReference type="Rhea" id="RHEA:47305"/>
    </physiologicalReaction>
</comment>
<comment type="catalytic activity">
    <reaction evidence="3">
        <text>heptadecanoyl-CoA + oxidized [electron-transfer flavoprotein] + H(+) = trans-2-heptadecenoyl-CoA + reduced [electron-transfer flavoprotein]</text>
        <dbReference type="Rhea" id="RHEA:48196"/>
        <dbReference type="Rhea" id="RHEA-COMP:10685"/>
        <dbReference type="Rhea" id="RHEA-COMP:10686"/>
        <dbReference type="ChEBI" id="CHEBI:15378"/>
        <dbReference type="ChEBI" id="CHEBI:57692"/>
        <dbReference type="ChEBI" id="CHEBI:58307"/>
        <dbReference type="ChEBI" id="CHEBI:74307"/>
        <dbReference type="ChEBI" id="CHEBI:77551"/>
    </reaction>
    <physiologicalReaction direction="left-to-right" evidence="3">
        <dbReference type="Rhea" id="RHEA:48197"/>
    </physiologicalReaction>
</comment>
<comment type="catalytic activity">
    <reaction evidence="3">
        <text>(9E)-octadecenoyl-CoA + oxidized [electron-transfer flavoprotein] + H(+) = (2E,9E)-octadecadienoyl-CoA + reduced [electron-transfer flavoprotein]</text>
        <dbReference type="Rhea" id="RHEA:48192"/>
        <dbReference type="Rhea" id="RHEA-COMP:10685"/>
        <dbReference type="Rhea" id="RHEA-COMP:10686"/>
        <dbReference type="ChEBI" id="CHEBI:15378"/>
        <dbReference type="ChEBI" id="CHEBI:57692"/>
        <dbReference type="ChEBI" id="CHEBI:58307"/>
        <dbReference type="ChEBI" id="CHEBI:77537"/>
        <dbReference type="ChEBI" id="CHEBI:77552"/>
    </reaction>
    <physiologicalReaction direction="left-to-right" evidence="3">
        <dbReference type="Rhea" id="RHEA:48193"/>
    </physiologicalReaction>
</comment>
<comment type="catalytic activity">
    <reaction evidence="3">
        <text>oxidized [electron-transfer flavoprotein] + (9Z)-octadecenoyl-CoA + H(+) = (2E,9Z)-octadecadienoyl-CoA + reduced [electron-transfer flavoprotein]</text>
        <dbReference type="Rhea" id="RHEA:47300"/>
        <dbReference type="Rhea" id="RHEA-COMP:10685"/>
        <dbReference type="Rhea" id="RHEA-COMP:10686"/>
        <dbReference type="ChEBI" id="CHEBI:15378"/>
        <dbReference type="ChEBI" id="CHEBI:57387"/>
        <dbReference type="ChEBI" id="CHEBI:57692"/>
        <dbReference type="ChEBI" id="CHEBI:58307"/>
        <dbReference type="ChEBI" id="CHEBI:77553"/>
    </reaction>
    <physiologicalReaction direction="left-to-right" evidence="3">
        <dbReference type="Rhea" id="RHEA:47301"/>
    </physiologicalReaction>
</comment>
<comment type="catalytic activity">
    <reaction evidence="3">
        <text>(9Z,12Z)-octadecadienoyl-CoA + oxidized [electron-transfer flavoprotein] + H(+) = (2E,9Z,12Z)-octadecatrienoyl-CoA + reduced [electron-transfer flavoprotein]</text>
        <dbReference type="Rhea" id="RHEA:48188"/>
        <dbReference type="Rhea" id="RHEA-COMP:10685"/>
        <dbReference type="Rhea" id="RHEA-COMP:10686"/>
        <dbReference type="ChEBI" id="CHEBI:15378"/>
        <dbReference type="ChEBI" id="CHEBI:57383"/>
        <dbReference type="ChEBI" id="CHEBI:57692"/>
        <dbReference type="ChEBI" id="CHEBI:58307"/>
        <dbReference type="ChEBI" id="CHEBI:77558"/>
    </reaction>
    <physiologicalReaction direction="left-to-right" evidence="3">
        <dbReference type="Rhea" id="RHEA:48189"/>
    </physiologicalReaction>
</comment>
<comment type="catalytic activity">
    <reaction evidence="3">
        <text>(4Z,7Z,10Z,13Z,16Z,19Z)-docosahexaenoyl-CoA + oxidized [electron-transfer flavoprotein] + H(+) = (2E,4Z,7Z,10Z,13Z,16Z,19Z)-docosaheptaenoyl-CoA + reduced [electron-transfer flavoprotein]</text>
        <dbReference type="Rhea" id="RHEA:48184"/>
        <dbReference type="Rhea" id="RHEA-COMP:10685"/>
        <dbReference type="Rhea" id="RHEA-COMP:10686"/>
        <dbReference type="ChEBI" id="CHEBI:15378"/>
        <dbReference type="ChEBI" id="CHEBI:57692"/>
        <dbReference type="ChEBI" id="CHEBI:58307"/>
        <dbReference type="ChEBI" id="CHEBI:74298"/>
        <dbReference type="ChEBI" id="CHEBI:77559"/>
    </reaction>
    <physiologicalReaction direction="left-to-right" evidence="3">
        <dbReference type="Rhea" id="RHEA:48185"/>
    </physiologicalReaction>
</comment>
<comment type="catalytic activity">
    <reaction evidence="3">
        <text>tetradecanoyl-CoA + oxidized [electron-transfer flavoprotein] + H(+) = (2E)-tetradecenoyl-CoA + reduced [electron-transfer flavoprotein]</text>
        <dbReference type="Rhea" id="RHEA:47316"/>
        <dbReference type="Rhea" id="RHEA-COMP:10685"/>
        <dbReference type="Rhea" id="RHEA-COMP:10686"/>
        <dbReference type="ChEBI" id="CHEBI:15378"/>
        <dbReference type="ChEBI" id="CHEBI:57385"/>
        <dbReference type="ChEBI" id="CHEBI:57692"/>
        <dbReference type="ChEBI" id="CHEBI:58307"/>
        <dbReference type="ChEBI" id="CHEBI:61405"/>
    </reaction>
    <physiologicalReaction direction="left-to-right" evidence="3">
        <dbReference type="Rhea" id="RHEA:47317"/>
    </physiologicalReaction>
</comment>
<comment type="cofactor">
    <cofactor evidence="3">
        <name>FAD</name>
        <dbReference type="ChEBI" id="CHEBI:57692"/>
    </cofactor>
</comment>
<comment type="subunit">
    <text evidence="3 6">Homodimer (By similarity). Interacts with NDUFAF1 and ECSIT (PubMed:22982022). Part of the mitochondrial complex I assembly/MCIA complex that comprises at least the core subunits TMEM126B, NDUFAF1, ECSIT and ACAD9 and complement subunits such as COA1 and TMEM186 (By similarity) (PubMed:22982022). Interacts with TMEM70 and TMEM242 (By similarity).</text>
</comment>
<comment type="subcellular location">
    <subcellularLocation>
        <location evidence="3">Mitochondrion inner membrane</location>
        <topology evidence="3">Peripheral membrane protein</topology>
        <orientation evidence="3">Matrix side</orientation>
    </subcellularLocation>
    <text evidence="3">Essentially associated with membranes.</text>
</comment>
<comment type="similarity">
    <text evidence="5">Belongs to the acyl-CoA dehydrogenase family.</text>
</comment>
<gene>
    <name evidence="8" type="primary">Acad9</name>
</gene>
<organism evidence="7">
    <name type="scientific">Rattus norvegicus</name>
    <name type="common">Rat</name>
    <dbReference type="NCBI Taxonomy" id="10116"/>
    <lineage>
        <taxon>Eukaryota</taxon>
        <taxon>Metazoa</taxon>
        <taxon>Chordata</taxon>
        <taxon>Craniata</taxon>
        <taxon>Vertebrata</taxon>
        <taxon>Euteleostomi</taxon>
        <taxon>Mammalia</taxon>
        <taxon>Eutheria</taxon>
        <taxon>Euarchontoglires</taxon>
        <taxon>Glires</taxon>
        <taxon>Rodentia</taxon>
        <taxon>Myomorpha</taxon>
        <taxon>Muroidea</taxon>
        <taxon>Muridae</taxon>
        <taxon>Murinae</taxon>
        <taxon>Rattus</taxon>
    </lineage>
</organism>
<reference key="1">
    <citation type="journal article" date="2004" name="Nature">
        <title>Genome sequence of the Brown Norway rat yields insights into mammalian evolution.</title>
        <authorList>
            <person name="Gibbs R.A."/>
            <person name="Weinstock G.M."/>
            <person name="Metzker M.L."/>
            <person name="Muzny D.M."/>
            <person name="Sodergren E.J."/>
            <person name="Scherer S."/>
            <person name="Scott G."/>
            <person name="Steffen D."/>
            <person name="Worley K.C."/>
            <person name="Burch P.E."/>
            <person name="Okwuonu G."/>
            <person name="Hines S."/>
            <person name="Lewis L."/>
            <person name="Deramo C."/>
            <person name="Delgado O."/>
            <person name="Dugan-Rocha S."/>
            <person name="Miner G."/>
            <person name="Morgan M."/>
            <person name="Hawes A."/>
            <person name="Gill R."/>
            <person name="Holt R.A."/>
            <person name="Adams M.D."/>
            <person name="Amanatides P.G."/>
            <person name="Baden-Tillson H."/>
            <person name="Barnstead M."/>
            <person name="Chin S."/>
            <person name="Evans C.A."/>
            <person name="Ferriera S."/>
            <person name="Fosler C."/>
            <person name="Glodek A."/>
            <person name="Gu Z."/>
            <person name="Jennings D."/>
            <person name="Kraft C.L."/>
            <person name="Nguyen T."/>
            <person name="Pfannkoch C.M."/>
            <person name="Sitter C."/>
            <person name="Sutton G.G."/>
            <person name="Venter J.C."/>
            <person name="Woodage T."/>
            <person name="Smith D."/>
            <person name="Lee H.-M."/>
            <person name="Gustafson E."/>
            <person name="Cahill P."/>
            <person name="Kana A."/>
            <person name="Doucette-Stamm L."/>
            <person name="Weinstock K."/>
            <person name="Fechtel K."/>
            <person name="Weiss R.B."/>
            <person name="Dunn D.M."/>
            <person name="Green E.D."/>
            <person name="Blakesley R.W."/>
            <person name="Bouffard G.G."/>
            <person name="De Jong P.J."/>
            <person name="Osoegawa K."/>
            <person name="Zhu B."/>
            <person name="Marra M."/>
            <person name="Schein J."/>
            <person name="Bosdet I."/>
            <person name="Fjell C."/>
            <person name="Jones S."/>
            <person name="Krzywinski M."/>
            <person name="Mathewson C."/>
            <person name="Siddiqui A."/>
            <person name="Wye N."/>
            <person name="McPherson J."/>
            <person name="Zhao S."/>
            <person name="Fraser C.M."/>
            <person name="Shetty J."/>
            <person name="Shatsman S."/>
            <person name="Geer K."/>
            <person name="Chen Y."/>
            <person name="Abramzon S."/>
            <person name="Nierman W.C."/>
            <person name="Havlak P.H."/>
            <person name="Chen R."/>
            <person name="Durbin K.J."/>
            <person name="Egan A."/>
            <person name="Ren Y."/>
            <person name="Song X.-Z."/>
            <person name="Li B."/>
            <person name="Liu Y."/>
            <person name="Qin X."/>
            <person name="Cawley S."/>
            <person name="Cooney A.J."/>
            <person name="D'Souza L.M."/>
            <person name="Martin K."/>
            <person name="Wu J.Q."/>
            <person name="Gonzalez-Garay M.L."/>
            <person name="Jackson A.R."/>
            <person name="Kalafus K.J."/>
            <person name="McLeod M.P."/>
            <person name="Milosavljevic A."/>
            <person name="Virk D."/>
            <person name="Volkov A."/>
            <person name="Wheeler D.A."/>
            <person name="Zhang Z."/>
            <person name="Bailey J.A."/>
            <person name="Eichler E.E."/>
            <person name="Tuzun E."/>
            <person name="Birney E."/>
            <person name="Mongin E."/>
            <person name="Ureta-Vidal A."/>
            <person name="Woodwark C."/>
            <person name="Zdobnov E."/>
            <person name="Bork P."/>
            <person name="Suyama M."/>
            <person name="Torrents D."/>
            <person name="Alexandersson M."/>
            <person name="Trask B.J."/>
            <person name="Young J.M."/>
            <person name="Huang H."/>
            <person name="Wang H."/>
            <person name="Xing H."/>
            <person name="Daniels S."/>
            <person name="Gietzen D."/>
            <person name="Schmidt J."/>
            <person name="Stevens K."/>
            <person name="Vitt U."/>
            <person name="Wingrove J."/>
            <person name="Camara F."/>
            <person name="Mar Alba M."/>
            <person name="Abril J.F."/>
            <person name="Guigo R."/>
            <person name="Smit A."/>
            <person name="Dubchak I."/>
            <person name="Rubin E.M."/>
            <person name="Couronne O."/>
            <person name="Poliakov A."/>
            <person name="Huebner N."/>
            <person name="Ganten D."/>
            <person name="Goesele C."/>
            <person name="Hummel O."/>
            <person name="Kreitler T."/>
            <person name="Lee Y.-A."/>
            <person name="Monti J."/>
            <person name="Schulz H."/>
            <person name="Zimdahl H."/>
            <person name="Himmelbauer H."/>
            <person name="Lehrach H."/>
            <person name="Jacob H.J."/>
            <person name="Bromberg S."/>
            <person name="Gullings-Handley J."/>
            <person name="Jensen-Seaman M.I."/>
            <person name="Kwitek A.E."/>
            <person name="Lazar J."/>
            <person name="Pasko D."/>
            <person name="Tonellato P.J."/>
            <person name="Twigger S."/>
            <person name="Ponting C.P."/>
            <person name="Duarte J.M."/>
            <person name="Rice S."/>
            <person name="Goodstadt L."/>
            <person name="Beatson S.A."/>
            <person name="Emes R.D."/>
            <person name="Winter E.E."/>
            <person name="Webber C."/>
            <person name="Brandt P."/>
            <person name="Nyakatura G."/>
            <person name="Adetobi M."/>
            <person name="Chiaromonte F."/>
            <person name="Elnitski L."/>
            <person name="Eswara P."/>
            <person name="Hardison R.C."/>
            <person name="Hou M."/>
            <person name="Kolbe D."/>
            <person name="Makova K."/>
            <person name="Miller W."/>
            <person name="Nekrutenko A."/>
            <person name="Riemer C."/>
            <person name="Schwartz S."/>
            <person name="Taylor J."/>
            <person name="Yang S."/>
            <person name="Zhang Y."/>
            <person name="Lindpaintner K."/>
            <person name="Andrews T.D."/>
            <person name="Caccamo M."/>
            <person name="Clamp M."/>
            <person name="Clarke L."/>
            <person name="Curwen V."/>
            <person name="Durbin R.M."/>
            <person name="Eyras E."/>
            <person name="Searle S.M."/>
            <person name="Cooper G.M."/>
            <person name="Batzoglou S."/>
            <person name="Brudno M."/>
            <person name="Sidow A."/>
            <person name="Stone E.A."/>
            <person name="Payseur B.A."/>
            <person name="Bourque G."/>
            <person name="Lopez-Otin C."/>
            <person name="Puente X.S."/>
            <person name="Chakrabarti K."/>
            <person name="Chatterji S."/>
            <person name="Dewey C."/>
            <person name="Pachter L."/>
            <person name="Bray N."/>
            <person name="Yap V.B."/>
            <person name="Caspi A."/>
            <person name="Tesler G."/>
            <person name="Pevzner P.A."/>
            <person name="Haussler D."/>
            <person name="Roskin K.M."/>
            <person name="Baertsch R."/>
            <person name="Clawson H."/>
            <person name="Furey T.S."/>
            <person name="Hinrichs A.S."/>
            <person name="Karolchik D."/>
            <person name="Kent W.J."/>
            <person name="Rosenbloom K.R."/>
            <person name="Trumbower H."/>
            <person name="Weirauch M."/>
            <person name="Cooper D.N."/>
            <person name="Stenson P.D."/>
            <person name="Ma B."/>
            <person name="Brent M."/>
            <person name="Arumugam M."/>
            <person name="Shteynberg D."/>
            <person name="Copley R.R."/>
            <person name="Taylor M.S."/>
            <person name="Riethman H."/>
            <person name="Mudunuri U."/>
            <person name="Peterson J."/>
            <person name="Guyer M."/>
            <person name="Felsenfeld A."/>
            <person name="Old S."/>
            <person name="Mockrin S."/>
            <person name="Collins F.S."/>
        </authorList>
    </citation>
    <scope>NUCLEOTIDE SEQUENCE [LARGE SCALE GENOMIC DNA]</scope>
    <source>
        <strain>Brown Norway</strain>
    </source>
</reference>
<reference key="2">
    <citation type="journal article" date="2004" name="Genome Res.">
        <title>The status, quality, and expansion of the NIH full-length cDNA project: the Mammalian Gene Collection (MGC).</title>
        <authorList>
            <consortium name="The MGC Project Team"/>
        </authorList>
    </citation>
    <scope>NUCLEOTIDE SEQUENCE [LARGE SCALE MRNA]</scope>
</reference>
<reference key="3">
    <citation type="journal article" date="2012" name="Cell Metab.">
        <title>Complexome profiling identifies TMEM126B as a component of the mitochondrial complex I assembly complex.</title>
        <authorList>
            <person name="Heide H."/>
            <person name="Bleier L."/>
            <person name="Steger M."/>
            <person name="Ackermann J."/>
            <person name="Drose S."/>
            <person name="Schwamb B."/>
            <person name="Zornig M."/>
            <person name="Reichert A.S."/>
            <person name="Koch I."/>
            <person name="Wittig I."/>
            <person name="Brandt U."/>
        </authorList>
    </citation>
    <scope>SUBUNIT</scope>
</reference>
<evidence type="ECO:0000250" key="1">
    <source>
        <dbReference type="UniProtKB" id="P49748"/>
    </source>
</evidence>
<evidence type="ECO:0000250" key="2">
    <source>
        <dbReference type="UniProtKB" id="Q8JZN5"/>
    </source>
</evidence>
<evidence type="ECO:0000250" key="3">
    <source>
        <dbReference type="UniProtKB" id="Q9H845"/>
    </source>
</evidence>
<evidence type="ECO:0000255" key="4"/>
<evidence type="ECO:0000255" key="5">
    <source>
        <dbReference type="RuleBase" id="RU362125"/>
    </source>
</evidence>
<evidence type="ECO:0000269" key="6">
    <source>
    </source>
</evidence>
<evidence type="ECO:0000312" key="7">
    <source>
        <dbReference type="EMBL" id="AAI62016.1"/>
    </source>
</evidence>
<evidence type="ECO:0000312" key="8">
    <source>
        <dbReference type="RGD" id="727973"/>
    </source>
</evidence>
<sequence>MSGYVLFSRGATAAAAAARASRVLRVFTERRRTLHTSLQSCSFAKELFLGHIQQKGVFPFPEVSQEELSEINQFVGPLEKFFNEEVDSRKIDQEGKIPADTLAKLKSLGLFGIQVPEEYGGLGLSNTMYARLGEIISMDASITVTLAAHQAIGLKGIILVGNEEQKAKYLPKLSSGEHIAAFCLTEPASGSDAASIQTRATLSEDKKYFVLNGSKVWITNGGLANIFTVFAKTEVVDSDGSIKDKMTAFIVERDFGGITNGKPEDKLGIRGSNTCEVHFENTRVPVENVLGEVGGGFKVAMNILNSGRFSMGSAVAGMLKKLIEQTAEYACTRKQFNRNLSEFGLIQEKFALMAQKAYVMESMAYLTSGMLDQPGFPDCSIEAAMVKVFSSEAAWQCVSEALQILGGSGYMKDYPYERMLRDARILLIFEGTNEILRLFIALTGLQHAGRILTSRIKELKSGNVTTVMETIGRKLRDSLGRTVDLGLSSNIAVVHPSLGDSANKLEENVHYFGRTVETLLLRFGKTIVEEQLVLKRVANILINLYGMTAVLSRASRSIRIGLKNHDHEILLANMFCVEAYFQNLFSLSQLDKYAPENLDEQIKKVSQQILEKRAYICAHPLDRAS</sequence>
<accession>B1WC61</accession>
<name>ACAD9_RAT</name>
<keyword id="KW-0007">Acetylation</keyword>
<keyword id="KW-0274">FAD</keyword>
<keyword id="KW-0285">Flavoprotein</keyword>
<keyword id="KW-0472">Membrane</keyword>
<keyword id="KW-0496">Mitochondrion</keyword>
<keyword id="KW-0999">Mitochondrion inner membrane</keyword>
<keyword id="KW-0560">Oxidoreductase</keyword>
<keyword id="KW-0597">Phosphoprotein</keyword>
<keyword id="KW-1185">Reference proteome</keyword>
<keyword id="KW-0809">Transit peptide</keyword>
<dbReference type="EC" id="1.3.8.-" evidence="3"/>
<dbReference type="EMBL" id="AABR07010088">
    <property type="status" value="NOT_ANNOTATED_CDS"/>
    <property type="molecule type" value="Genomic_DNA"/>
</dbReference>
<dbReference type="EMBL" id="BC162016">
    <property type="protein sequence ID" value="AAI62016.1"/>
    <property type="molecule type" value="mRNA"/>
</dbReference>
<dbReference type="RefSeq" id="NP_861433.2">
    <property type="nucleotide sequence ID" value="NM_181768.2"/>
</dbReference>
<dbReference type="RefSeq" id="XP_006232331.1">
    <property type="nucleotide sequence ID" value="XM_006232269.1"/>
</dbReference>
<dbReference type="SMR" id="B1WC61"/>
<dbReference type="FunCoup" id="B1WC61">
    <property type="interactions" value="2386"/>
</dbReference>
<dbReference type="IntAct" id="B1WC61">
    <property type="interactions" value="2"/>
</dbReference>
<dbReference type="STRING" id="10116.ENSRNOP00000019108"/>
<dbReference type="iPTMnet" id="B1WC61"/>
<dbReference type="PhosphoSitePlus" id="B1WC61"/>
<dbReference type="jPOST" id="B1WC61"/>
<dbReference type="PaxDb" id="10116-ENSRNOP00000019108"/>
<dbReference type="PeptideAtlas" id="B1WC61"/>
<dbReference type="Ensembl" id="ENSRNOT00000089353.2">
    <property type="protein sequence ID" value="ENSRNOP00000070329.1"/>
    <property type="gene ID" value="ENSRNOG00000014178.6"/>
</dbReference>
<dbReference type="GeneID" id="294973"/>
<dbReference type="KEGG" id="rno:294973"/>
<dbReference type="AGR" id="RGD:727973"/>
<dbReference type="CTD" id="28976"/>
<dbReference type="RGD" id="727973">
    <property type="gene designation" value="Acad9"/>
</dbReference>
<dbReference type="eggNOG" id="KOG0137">
    <property type="taxonomic scope" value="Eukaryota"/>
</dbReference>
<dbReference type="GeneTree" id="ENSGT00940000157312"/>
<dbReference type="HOGENOM" id="CLU_018204_11_2_1"/>
<dbReference type="InParanoid" id="B1WC61"/>
<dbReference type="OMA" id="CDLANDW"/>
<dbReference type="OrthoDB" id="40236at9989"/>
<dbReference type="TreeFam" id="TF105053"/>
<dbReference type="Reactome" id="R-RNO-6799198">
    <property type="pathway name" value="Complex I biogenesis"/>
</dbReference>
<dbReference type="PRO" id="PR:B1WC61"/>
<dbReference type="Proteomes" id="UP000002494">
    <property type="component" value="Chromosome 2"/>
</dbReference>
<dbReference type="Bgee" id="ENSRNOG00000014178">
    <property type="expression patterns" value="Expressed in heart and 19 other cell types or tissues"/>
</dbReference>
<dbReference type="GO" id="GO:0030425">
    <property type="term" value="C:dendrite"/>
    <property type="evidence" value="ECO:0000266"/>
    <property type="project" value="RGD"/>
</dbReference>
<dbReference type="GO" id="GO:0005743">
    <property type="term" value="C:mitochondrial inner membrane"/>
    <property type="evidence" value="ECO:0007669"/>
    <property type="project" value="UniProtKB-SubCell"/>
</dbReference>
<dbReference type="GO" id="GO:0031966">
    <property type="term" value="C:mitochondrial membrane"/>
    <property type="evidence" value="ECO:0000266"/>
    <property type="project" value="RGD"/>
</dbReference>
<dbReference type="GO" id="GO:0005739">
    <property type="term" value="C:mitochondrion"/>
    <property type="evidence" value="ECO:0000266"/>
    <property type="project" value="RGD"/>
</dbReference>
<dbReference type="GO" id="GO:0005634">
    <property type="term" value="C:nucleus"/>
    <property type="evidence" value="ECO:0000266"/>
    <property type="project" value="RGD"/>
</dbReference>
<dbReference type="GO" id="GO:0003995">
    <property type="term" value="F:acyl-CoA dehydrogenase activity"/>
    <property type="evidence" value="ECO:0000318"/>
    <property type="project" value="GO_Central"/>
</dbReference>
<dbReference type="GO" id="GO:0050660">
    <property type="term" value="F:flavin adenine dinucleotide binding"/>
    <property type="evidence" value="ECO:0007669"/>
    <property type="project" value="InterPro"/>
</dbReference>
<dbReference type="GO" id="GO:0004466">
    <property type="term" value="F:long-chain fatty acyl-CoA dehydrogenase activity"/>
    <property type="evidence" value="ECO:0000266"/>
    <property type="project" value="RGD"/>
</dbReference>
<dbReference type="GO" id="GO:0070991">
    <property type="term" value="F:medium-chain fatty acyl-CoA dehydrogenase activity"/>
    <property type="evidence" value="ECO:0000266"/>
    <property type="project" value="RGD"/>
</dbReference>
<dbReference type="GO" id="GO:0046395">
    <property type="term" value="P:carboxylic acid catabolic process"/>
    <property type="evidence" value="ECO:0007669"/>
    <property type="project" value="UniProtKB-ARBA"/>
</dbReference>
<dbReference type="GO" id="GO:0001676">
    <property type="term" value="P:long-chain fatty acid metabolic process"/>
    <property type="evidence" value="ECO:0000266"/>
    <property type="project" value="RGD"/>
</dbReference>
<dbReference type="GO" id="GO:0051791">
    <property type="term" value="P:medium-chain fatty acid metabolic process"/>
    <property type="evidence" value="ECO:0000266"/>
    <property type="project" value="RGD"/>
</dbReference>
<dbReference type="GO" id="GO:0032981">
    <property type="term" value="P:mitochondrial respiratory chain complex I assembly"/>
    <property type="evidence" value="ECO:0000266"/>
    <property type="project" value="RGD"/>
</dbReference>
<dbReference type="CDD" id="cd01161">
    <property type="entry name" value="VLCAD"/>
    <property type="match status" value="1"/>
</dbReference>
<dbReference type="FunFam" id="1.20.140.10:FF:000023">
    <property type="entry name" value="Acyl-CoA dehydrogenase family member 9"/>
    <property type="match status" value="1"/>
</dbReference>
<dbReference type="FunFam" id="1.20.140.10:FF:000008">
    <property type="entry name" value="acyl-CoA dehydrogenase family member 9, mitochondrial"/>
    <property type="match status" value="1"/>
</dbReference>
<dbReference type="FunFam" id="2.40.110.10:FF:000006">
    <property type="entry name" value="very long-chain specific acyl-CoA dehydrogenase, mitochondrial"/>
    <property type="match status" value="1"/>
</dbReference>
<dbReference type="FunFam" id="1.10.540.10:FF:000001">
    <property type="entry name" value="Very long-chain-specific acyl-CoA dehydrogenase, mitochondrial"/>
    <property type="match status" value="1"/>
</dbReference>
<dbReference type="Gene3D" id="1.10.540.10">
    <property type="entry name" value="Acyl-CoA dehydrogenase/oxidase, N-terminal domain"/>
    <property type="match status" value="1"/>
</dbReference>
<dbReference type="Gene3D" id="2.40.110.10">
    <property type="entry name" value="Butyryl-CoA Dehydrogenase, subunit A, domain 2"/>
    <property type="match status" value="1"/>
</dbReference>
<dbReference type="Gene3D" id="1.20.140.10">
    <property type="entry name" value="Butyryl-CoA Dehydrogenase, subunit A, domain 3"/>
    <property type="match status" value="2"/>
</dbReference>
<dbReference type="InterPro" id="IPR049448">
    <property type="entry name" value="ACAD9/ACADV-like_C"/>
</dbReference>
<dbReference type="InterPro" id="IPR006089">
    <property type="entry name" value="Acyl-CoA_DH_CS"/>
</dbReference>
<dbReference type="InterPro" id="IPR006091">
    <property type="entry name" value="Acyl-CoA_Oxase/DH_mid-dom"/>
</dbReference>
<dbReference type="InterPro" id="IPR046373">
    <property type="entry name" value="Acyl-CoA_Oxase/DH_mid-dom_sf"/>
</dbReference>
<dbReference type="InterPro" id="IPR036250">
    <property type="entry name" value="AcylCo_DH-like_C"/>
</dbReference>
<dbReference type="InterPro" id="IPR009075">
    <property type="entry name" value="AcylCo_DH/oxidase_C"/>
</dbReference>
<dbReference type="InterPro" id="IPR013786">
    <property type="entry name" value="AcylCoA_DH/ox_N"/>
</dbReference>
<dbReference type="InterPro" id="IPR037069">
    <property type="entry name" value="AcylCoA_DH/ox_N_sf"/>
</dbReference>
<dbReference type="InterPro" id="IPR009100">
    <property type="entry name" value="AcylCoA_DH/oxidase_NM_dom_sf"/>
</dbReference>
<dbReference type="PANTHER" id="PTHR43884">
    <property type="entry name" value="ACYL-COA DEHYDROGENASE"/>
    <property type="match status" value="1"/>
</dbReference>
<dbReference type="PANTHER" id="PTHR43884:SF9">
    <property type="entry name" value="COMPLEX I ASSEMBLY FACTOR ACAD9, MITOCHONDRIAL"/>
    <property type="match status" value="1"/>
</dbReference>
<dbReference type="Pfam" id="PF21343">
    <property type="entry name" value="ACAD9-ACADV_C"/>
    <property type="match status" value="1"/>
</dbReference>
<dbReference type="Pfam" id="PF00441">
    <property type="entry name" value="Acyl-CoA_dh_1"/>
    <property type="match status" value="1"/>
</dbReference>
<dbReference type="Pfam" id="PF02770">
    <property type="entry name" value="Acyl-CoA_dh_M"/>
    <property type="match status" value="1"/>
</dbReference>
<dbReference type="Pfam" id="PF02771">
    <property type="entry name" value="Acyl-CoA_dh_N"/>
    <property type="match status" value="1"/>
</dbReference>
<dbReference type="SUPFAM" id="SSF47203">
    <property type="entry name" value="Acyl-CoA dehydrogenase C-terminal domain-like"/>
    <property type="match status" value="2"/>
</dbReference>
<dbReference type="SUPFAM" id="SSF56645">
    <property type="entry name" value="Acyl-CoA dehydrogenase NM domain-like"/>
    <property type="match status" value="1"/>
</dbReference>
<dbReference type="PROSITE" id="PS00072">
    <property type="entry name" value="ACYL_COA_DH_1"/>
    <property type="match status" value="1"/>
</dbReference>
<dbReference type="PROSITE" id="PS00073">
    <property type="entry name" value="ACYL_COA_DH_2"/>
    <property type="match status" value="1"/>
</dbReference>
<protein>
    <recommendedName>
        <fullName evidence="3">Complex I assembly factor ACAD9, mitochondrial</fullName>
    </recommendedName>
    <alternativeName>
        <fullName evidence="3">Acyl-CoA dehydrogenase family member 9</fullName>
        <shortName evidence="3">ACAD-9</shortName>
        <ecNumber evidence="3">1.3.8.-</ecNumber>
    </alternativeName>
</protein>
<feature type="transit peptide" description="Mitochondrion" evidence="4">
    <location>
        <begin position="1"/>
        <end position="41"/>
    </location>
</feature>
<feature type="chain" id="PRO_0000447709" description="Complex I assembly factor ACAD9, mitochondrial">
    <location>
        <begin position="42"/>
        <end position="625"/>
    </location>
</feature>
<feature type="active site" description="Proton acceptor" evidence="1">
    <location>
        <position position="430"/>
    </location>
</feature>
<feature type="modified residue" description="N6-acetyllysine" evidence="3">
    <location>
        <position position="45"/>
    </location>
</feature>
<feature type="modified residue" description="N6-succinyllysine" evidence="2">
    <location>
        <position position="96"/>
    </location>
</feature>
<feature type="modified residue" description="Phosphothreonine" evidence="2">
    <location>
        <position position="482"/>
    </location>
</feature>
<feature type="modified residue" description="N6-acetyllysine; alternate" evidence="2">
    <location>
        <position position="525"/>
    </location>
</feature>
<feature type="modified residue" description="N6-succinyllysine; alternate" evidence="2">
    <location>
        <position position="525"/>
    </location>
</feature>
<proteinExistence type="evidence at protein level"/>